<name>CEBPD_RAT</name>
<accession>Q03484</accession>
<dbReference type="EMBL" id="M65149">
    <property type="protein sequence ID" value="AAA40913.1"/>
    <property type="molecule type" value="mRNA"/>
</dbReference>
<dbReference type="PIR" id="B39429">
    <property type="entry name" value="B39429"/>
</dbReference>
<dbReference type="RefSeq" id="NP_037286.1">
    <property type="nucleotide sequence ID" value="NM_013154.2"/>
</dbReference>
<dbReference type="SMR" id="Q03484"/>
<dbReference type="FunCoup" id="Q03484">
    <property type="interactions" value="80"/>
</dbReference>
<dbReference type="STRING" id="10116.ENSRNOP00000064025"/>
<dbReference type="GlyGen" id="Q03484">
    <property type="glycosylation" value="2 sites"/>
</dbReference>
<dbReference type="iPTMnet" id="Q03484"/>
<dbReference type="PhosphoSitePlus" id="Q03484"/>
<dbReference type="PaxDb" id="10116-ENSRNOP00000064025"/>
<dbReference type="Ensembl" id="ENSRNOT00000074586.3">
    <property type="protein sequence ID" value="ENSRNOP00000064025.1"/>
    <property type="gene ID" value="ENSRNOG00000050869.3"/>
</dbReference>
<dbReference type="GeneID" id="25695"/>
<dbReference type="KEGG" id="rno:25695"/>
<dbReference type="AGR" id="RGD:2328"/>
<dbReference type="CTD" id="1052"/>
<dbReference type="RGD" id="2328">
    <property type="gene designation" value="Cebpd"/>
</dbReference>
<dbReference type="eggNOG" id="KOG3119">
    <property type="taxonomic scope" value="Eukaryota"/>
</dbReference>
<dbReference type="GeneTree" id="ENSGT00940000163032"/>
<dbReference type="HOGENOM" id="CLU_043327_2_1_1"/>
<dbReference type="InParanoid" id="Q03484"/>
<dbReference type="OMA" id="RRNMEMQ"/>
<dbReference type="OrthoDB" id="10032067at2759"/>
<dbReference type="PhylomeDB" id="Q03484"/>
<dbReference type="PRO" id="PR:Q03484"/>
<dbReference type="Proteomes" id="UP000002494">
    <property type="component" value="Chromosome 11"/>
</dbReference>
<dbReference type="Bgee" id="ENSRNOG00000050869">
    <property type="expression patterns" value="Expressed in skeletal muscle tissue and 19 other cell types or tissues"/>
</dbReference>
<dbReference type="GO" id="GO:0005634">
    <property type="term" value="C:nucleus"/>
    <property type="evidence" value="ECO:0000266"/>
    <property type="project" value="RGD"/>
</dbReference>
<dbReference type="GO" id="GO:0090575">
    <property type="term" value="C:RNA polymerase II transcription regulator complex"/>
    <property type="evidence" value="ECO:0000266"/>
    <property type="project" value="RGD"/>
</dbReference>
<dbReference type="GO" id="GO:0003677">
    <property type="term" value="F:DNA binding"/>
    <property type="evidence" value="ECO:0000266"/>
    <property type="project" value="RGD"/>
</dbReference>
<dbReference type="GO" id="GO:0001228">
    <property type="term" value="F:DNA-binding transcription activator activity, RNA polymerase II-specific"/>
    <property type="evidence" value="ECO:0000314"/>
    <property type="project" value="NTNU_SB"/>
</dbReference>
<dbReference type="GO" id="GO:0000981">
    <property type="term" value="F:DNA-binding transcription factor activity, RNA polymerase II-specific"/>
    <property type="evidence" value="ECO:0000318"/>
    <property type="project" value="GO_Central"/>
</dbReference>
<dbReference type="GO" id="GO:0042802">
    <property type="term" value="F:identical protein binding"/>
    <property type="evidence" value="ECO:0000266"/>
    <property type="project" value="RGD"/>
</dbReference>
<dbReference type="GO" id="GO:0000978">
    <property type="term" value="F:RNA polymerase II cis-regulatory region sequence-specific DNA binding"/>
    <property type="evidence" value="ECO:0000314"/>
    <property type="project" value="NTNU_SB"/>
</dbReference>
<dbReference type="GO" id="GO:0043565">
    <property type="term" value="F:sequence-specific DNA binding"/>
    <property type="evidence" value="ECO:0000314"/>
    <property type="project" value="RGD"/>
</dbReference>
<dbReference type="GO" id="GO:1990837">
    <property type="term" value="F:sequence-specific double-stranded DNA binding"/>
    <property type="evidence" value="ECO:0000266"/>
    <property type="project" value="RGD"/>
</dbReference>
<dbReference type="GO" id="GO:0000976">
    <property type="term" value="F:transcription cis-regulatory region binding"/>
    <property type="evidence" value="ECO:0000266"/>
    <property type="project" value="RGD"/>
</dbReference>
<dbReference type="GO" id="GO:0006351">
    <property type="term" value="P:DNA-templated transcription"/>
    <property type="evidence" value="ECO:0007669"/>
    <property type="project" value="InterPro"/>
</dbReference>
<dbReference type="GO" id="GO:0045444">
    <property type="term" value="P:fat cell differentiation"/>
    <property type="evidence" value="ECO:0000266"/>
    <property type="project" value="RGD"/>
</dbReference>
<dbReference type="GO" id="GO:0002244">
    <property type="term" value="P:hematopoietic progenitor cell differentiation"/>
    <property type="evidence" value="ECO:0000266"/>
    <property type="project" value="RGD"/>
</dbReference>
<dbReference type="GO" id="GO:0048839">
    <property type="term" value="P:inner ear development"/>
    <property type="evidence" value="ECO:0000266"/>
    <property type="project" value="RGD"/>
</dbReference>
<dbReference type="GO" id="GO:0045892">
    <property type="term" value="P:negative regulation of DNA-templated transcription"/>
    <property type="evidence" value="ECO:0000266"/>
    <property type="project" value="RGD"/>
</dbReference>
<dbReference type="GO" id="GO:0045669">
    <property type="term" value="P:positive regulation of osteoblast differentiation"/>
    <property type="evidence" value="ECO:0000266"/>
    <property type="project" value="RGD"/>
</dbReference>
<dbReference type="GO" id="GO:0045944">
    <property type="term" value="P:positive regulation of transcription by RNA polymerase II"/>
    <property type="evidence" value="ECO:0000314"/>
    <property type="project" value="NTNU_SB"/>
</dbReference>
<dbReference type="GO" id="GO:0045595">
    <property type="term" value="P:regulation of cell differentiation"/>
    <property type="evidence" value="ECO:0000318"/>
    <property type="project" value="GO_Central"/>
</dbReference>
<dbReference type="GO" id="GO:0006357">
    <property type="term" value="P:regulation of transcription by RNA polymerase II"/>
    <property type="evidence" value="ECO:0000266"/>
    <property type="project" value="RGD"/>
</dbReference>
<dbReference type="CDD" id="cd14714">
    <property type="entry name" value="bZIP_CEBPD"/>
    <property type="match status" value="1"/>
</dbReference>
<dbReference type="FunFam" id="1.20.5.170:FF:000028">
    <property type="entry name" value="CCAAT/enhancer-binding protein beta"/>
    <property type="match status" value="1"/>
</dbReference>
<dbReference type="Gene3D" id="1.20.5.170">
    <property type="match status" value="1"/>
</dbReference>
<dbReference type="InterPro" id="IPR004827">
    <property type="entry name" value="bZIP"/>
</dbReference>
<dbReference type="InterPro" id="IPR046347">
    <property type="entry name" value="bZIP_sf"/>
</dbReference>
<dbReference type="InterPro" id="IPR031106">
    <property type="entry name" value="C/EBP"/>
</dbReference>
<dbReference type="InterPro" id="IPR016468">
    <property type="entry name" value="C/EBP_chordates"/>
</dbReference>
<dbReference type="PANTHER" id="PTHR23334">
    <property type="entry name" value="CCAAT/ENHANCER BINDING PROTEIN"/>
    <property type="match status" value="1"/>
</dbReference>
<dbReference type="PANTHER" id="PTHR23334:SF3">
    <property type="entry name" value="CCAAT_ENHANCER-BINDING PROTEIN DELTA"/>
    <property type="match status" value="1"/>
</dbReference>
<dbReference type="Pfam" id="PF07716">
    <property type="entry name" value="bZIP_2"/>
    <property type="match status" value="1"/>
</dbReference>
<dbReference type="PIRSF" id="PIRSF005879">
    <property type="entry name" value="CCAAT/enhancer-binding"/>
    <property type="match status" value="1"/>
</dbReference>
<dbReference type="SMART" id="SM00338">
    <property type="entry name" value="BRLZ"/>
    <property type="match status" value="1"/>
</dbReference>
<dbReference type="SUPFAM" id="SSF57959">
    <property type="entry name" value="Leucine zipper domain"/>
    <property type="match status" value="1"/>
</dbReference>
<dbReference type="PROSITE" id="PS50217">
    <property type="entry name" value="BZIP"/>
    <property type="match status" value="1"/>
</dbReference>
<reference key="1">
    <citation type="journal article" date="1991" name="J. Biol. Chem.">
        <title>Molecular characterization of transcription factors that bind to the cAMP responsive region of the substance P precursor gene. cDNA cloning of a novel C/EBP-related factor.</title>
        <authorList>
            <person name="Kageyama R."/>
            <person name="Sasai Y."/>
            <person name="Nakanishi S."/>
        </authorList>
    </citation>
    <scope>NUCLEOTIDE SEQUENCE [MRNA]</scope>
    <scope>FUNCTION</scope>
    <scope>SUBCELLULAR LOCATION</scope>
    <scope>TISSUE SPECIFICITY</scope>
    <source>
        <tissue>Brain</tissue>
    </source>
</reference>
<comment type="function">
    <text evidence="2 6">Transcription activator that recognizes two different DNA motifs: the CCAAT homology common to many promoters and the enhanced core homology common to many enhancers (PubMed:1714459). Important transcription factor regulating the expression of genes involved in immune and inflammatory responses. Transcriptional activator that enhances IL6 transcription alone and as heterodimer with CEBPB (By similarity).</text>
</comment>
<comment type="subunit">
    <text evidence="2 3">Binds DNA as a homodimer and as a heterodimer. Can form stable heterodimers with CEBPA, CEBPB and CEBPE. Directly interacts with SPI1/PU.1; this interaction does not affect DNA-binding properties of each partner. Interacts with PRDM16.</text>
</comment>
<comment type="subcellular location">
    <subcellularLocation>
        <location evidence="8">Nucleus</location>
    </subcellularLocation>
</comment>
<comment type="tissue specificity">
    <text evidence="6">Ubiquitously expressed.</text>
</comment>
<comment type="similarity">
    <text evidence="7">Belongs to the bZIP family. C/EBP subfamily.</text>
</comment>
<feature type="initiator methionine" description="Removed" evidence="2">
    <location>
        <position position="1"/>
    </location>
</feature>
<feature type="chain" id="PRO_0000076623" description="CCAAT/enhancer-binding protein delta">
    <location>
        <begin position="2"/>
        <end position="268"/>
    </location>
</feature>
<feature type="domain" description="bZIP" evidence="4">
    <location>
        <begin position="191"/>
        <end position="254"/>
    </location>
</feature>
<feature type="region of interest" description="Disordered" evidence="5">
    <location>
        <begin position="1"/>
        <end position="50"/>
    </location>
</feature>
<feature type="region of interest" description="Disordered" evidence="5">
    <location>
        <begin position="98"/>
        <end position="132"/>
    </location>
</feature>
<feature type="region of interest" description="Disordered" evidence="5">
    <location>
        <begin position="152"/>
        <end position="223"/>
    </location>
</feature>
<feature type="region of interest" description="Basic motif" evidence="4">
    <location>
        <begin position="195"/>
        <end position="222"/>
    </location>
</feature>
<feature type="region of interest" description="Leucine-zipper" evidence="4">
    <location>
        <begin position="226"/>
        <end position="254"/>
    </location>
</feature>
<feature type="compositionally biased region" description="Pro residues" evidence="5">
    <location>
        <begin position="155"/>
        <end position="173"/>
    </location>
</feature>
<feature type="compositionally biased region" description="Basic and acidic residues" evidence="5">
    <location>
        <begin position="177"/>
        <end position="201"/>
    </location>
</feature>
<feature type="modified residue" description="N-acetylserine" evidence="2">
    <location>
        <position position="2"/>
    </location>
</feature>
<feature type="cross-link" description="Glycyl lysine isopeptide (Lys-Gly) (interchain with G-Cter in SUMO)" evidence="1">
    <location>
        <position position="120"/>
    </location>
</feature>
<keyword id="KW-0007">Acetylation</keyword>
<keyword id="KW-0010">Activator</keyword>
<keyword id="KW-0238">DNA-binding</keyword>
<keyword id="KW-1017">Isopeptide bond</keyword>
<keyword id="KW-0539">Nucleus</keyword>
<keyword id="KW-1185">Reference proteome</keyword>
<keyword id="KW-0804">Transcription</keyword>
<keyword id="KW-0805">Transcription regulation</keyword>
<keyword id="KW-0832">Ubl conjugation</keyword>
<sequence>MSAALFSLDSPARGAPWPTEPAAFYEPGRVGKPGRGPEPGDLGEPGSTTPAMYDDESAIDFSAYIDSMAAVPTLELCHDEIFADLFNSNHKAAGAGSLELLQGGPTRPPGVGSIARGPLKREPDWGDGDAPGSLLPAQVAVCAQTVVSLAAAAQPTPPTSPEPPRGSPGPSLAPGPVREKGAGKRGPDRGSPEYRQRRERNNIAVRKSRDKAKRRNQEMQQKLVELSAENEKLHQRVEQLTRDLASLRQFFKELPSPPFLPPTGTDCR</sequence>
<organism>
    <name type="scientific">Rattus norvegicus</name>
    <name type="common">Rat</name>
    <dbReference type="NCBI Taxonomy" id="10116"/>
    <lineage>
        <taxon>Eukaryota</taxon>
        <taxon>Metazoa</taxon>
        <taxon>Chordata</taxon>
        <taxon>Craniata</taxon>
        <taxon>Vertebrata</taxon>
        <taxon>Euteleostomi</taxon>
        <taxon>Mammalia</taxon>
        <taxon>Eutheria</taxon>
        <taxon>Euarchontoglires</taxon>
        <taxon>Glires</taxon>
        <taxon>Rodentia</taxon>
        <taxon>Myomorpha</taxon>
        <taxon>Muroidea</taxon>
        <taxon>Muridae</taxon>
        <taxon>Murinae</taxon>
        <taxon>Rattus</taxon>
    </lineage>
</organism>
<gene>
    <name type="primary">Cebpd</name>
    <name type="synonym">Celf</name>
</gene>
<proteinExistence type="evidence at transcript level"/>
<protein>
    <recommendedName>
        <fullName>CCAAT/enhancer-binding protein delta</fullName>
        <shortName>C/EBP delta</shortName>
    </recommendedName>
    <alternativeName>
        <fullName>Transcription factor CELF</fullName>
    </alternativeName>
</protein>
<evidence type="ECO:0000250" key="1"/>
<evidence type="ECO:0000250" key="2">
    <source>
        <dbReference type="UniProtKB" id="P49716"/>
    </source>
</evidence>
<evidence type="ECO:0000250" key="3">
    <source>
        <dbReference type="UniProtKB" id="Q00322"/>
    </source>
</evidence>
<evidence type="ECO:0000255" key="4">
    <source>
        <dbReference type="PROSITE-ProRule" id="PRU00978"/>
    </source>
</evidence>
<evidence type="ECO:0000256" key="5">
    <source>
        <dbReference type="SAM" id="MobiDB-lite"/>
    </source>
</evidence>
<evidence type="ECO:0000269" key="6">
    <source>
    </source>
</evidence>
<evidence type="ECO:0000305" key="7"/>
<evidence type="ECO:0000305" key="8">
    <source>
    </source>
</evidence>